<accession>Q4QKG3</accession>
<comment type="function">
    <text evidence="1">Catalyzes the ATP-dependent transfer of a sulfur to tRNA to produce 4-thiouridine in position 8 of tRNAs, which functions as a near-UV photosensor. Also catalyzes the transfer of sulfur to the sulfur carrier protein ThiS, forming ThiS-thiocarboxylate. This is a step in the synthesis of thiazole, in the thiamine biosynthesis pathway. The sulfur is donated as persulfide by IscS.</text>
</comment>
<comment type="catalytic activity">
    <reaction evidence="1">
        <text>[ThiI sulfur-carrier protein]-S-sulfanyl-L-cysteine + a uridine in tRNA + 2 reduced [2Fe-2S]-[ferredoxin] + ATP + H(+) = [ThiI sulfur-carrier protein]-L-cysteine + a 4-thiouridine in tRNA + 2 oxidized [2Fe-2S]-[ferredoxin] + AMP + diphosphate</text>
        <dbReference type="Rhea" id="RHEA:24176"/>
        <dbReference type="Rhea" id="RHEA-COMP:10000"/>
        <dbReference type="Rhea" id="RHEA-COMP:10001"/>
        <dbReference type="Rhea" id="RHEA-COMP:13337"/>
        <dbReference type="Rhea" id="RHEA-COMP:13338"/>
        <dbReference type="Rhea" id="RHEA-COMP:13339"/>
        <dbReference type="Rhea" id="RHEA-COMP:13340"/>
        <dbReference type="ChEBI" id="CHEBI:15378"/>
        <dbReference type="ChEBI" id="CHEBI:29950"/>
        <dbReference type="ChEBI" id="CHEBI:30616"/>
        <dbReference type="ChEBI" id="CHEBI:33019"/>
        <dbReference type="ChEBI" id="CHEBI:33737"/>
        <dbReference type="ChEBI" id="CHEBI:33738"/>
        <dbReference type="ChEBI" id="CHEBI:61963"/>
        <dbReference type="ChEBI" id="CHEBI:65315"/>
        <dbReference type="ChEBI" id="CHEBI:136798"/>
        <dbReference type="ChEBI" id="CHEBI:456215"/>
        <dbReference type="EC" id="2.8.1.4"/>
    </reaction>
</comment>
<comment type="catalytic activity">
    <reaction evidence="1">
        <text>[ThiS sulfur-carrier protein]-C-terminal Gly-Gly-AMP + S-sulfanyl-L-cysteinyl-[cysteine desulfurase] + AH2 = [ThiS sulfur-carrier protein]-C-terminal-Gly-aminoethanethioate + L-cysteinyl-[cysteine desulfurase] + A + AMP + 2 H(+)</text>
        <dbReference type="Rhea" id="RHEA:43340"/>
        <dbReference type="Rhea" id="RHEA-COMP:12157"/>
        <dbReference type="Rhea" id="RHEA-COMP:12158"/>
        <dbReference type="Rhea" id="RHEA-COMP:12910"/>
        <dbReference type="Rhea" id="RHEA-COMP:19908"/>
        <dbReference type="ChEBI" id="CHEBI:13193"/>
        <dbReference type="ChEBI" id="CHEBI:15378"/>
        <dbReference type="ChEBI" id="CHEBI:17499"/>
        <dbReference type="ChEBI" id="CHEBI:29950"/>
        <dbReference type="ChEBI" id="CHEBI:61963"/>
        <dbReference type="ChEBI" id="CHEBI:90618"/>
        <dbReference type="ChEBI" id="CHEBI:232372"/>
        <dbReference type="ChEBI" id="CHEBI:456215"/>
    </reaction>
</comment>
<comment type="pathway">
    <text evidence="1">Cofactor biosynthesis; thiamine diphosphate biosynthesis.</text>
</comment>
<comment type="subcellular location">
    <subcellularLocation>
        <location evidence="1">Cytoplasm</location>
    </subcellularLocation>
</comment>
<comment type="similarity">
    <text evidence="1">Belongs to the ThiI family.</text>
</comment>
<feature type="chain" id="PRO_0000154842" description="tRNA sulfurtransferase">
    <location>
        <begin position="1"/>
        <end position="485"/>
    </location>
</feature>
<feature type="domain" description="THUMP" evidence="1">
    <location>
        <begin position="61"/>
        <end position="165"/>
    </location>
</feature>
<feature type="domain" description="Rhodanese" evidence="1">
    <location>
        <begin position="404"/>
        <end position="483"/>
    </location>
</feature>
<feature type="active site" description="Cysteine persulfide intermediate" evidence="1">
    <location>
        <position position="456"/>
    </location>
</feature>
<feature type="binding site" evidence="1">
    <location>
        <begin position="183"/>
        <end position="184"/>
    </location>
    <ligand>
        <name>ATP</name>
        <dbReference type="ChEBI" id="CHEBI:30616"/>
    </ligand>
</feature>
<feature type="binding site" evidence="1">
    <location>
        <position position="265"/>
    </location>
    <ligand>
        <name>ATP</name>
        <dbReference type="ChEBI" id="CHEBI:30616"/>
    </ligand>
</feature>
<feature type="binding site" evidence="1">
    <location>
        <position position="287"/>
    </location>
    <ligand>
        <name>ATP</name>
        <dbReference type="ChEBI" id="CHEBI:30616"/>
    </ligand>
</feature>
<feature type="binding site" evidence="1">
    <location>
        <position position="296"/>
    </location>
    <ligand>
        <name>ATP</name>
        <dbReference type="ChEBI" id="CHEBI:30616"/>
    </ligand>
</feature>
<feature type="disulfide bond" description="Redox-active" evidence="1">
    <location>
        <begin position="344"/>
        <end position="456"/>
    </location>
</feature>
<reference key="1">
    <citation type="journal article" date="2005" name="J. Bacteriol.">
        <title>Genomic sequence of an otitis media isolate of nontypeable Haemophilus influenzae: comparative study with H. influenzae serotype d, strain KW20.</title>
        <authorList>
            <person name="Harrison A."/>
            <person name="Dyer D.W."/>
            <person name="Gillaspy A."/>
            <person name="Ray W.C."/>
            <person name="Mungur R."/>
            <person name="Carson M.B."/>
            <person name="Zhong H."/>
            <person name="Gipson J."/>
            <person name="Gipson M."/>
            <person name="Johnson L.S."/>
            <person name="Lewis L."/>
            <person name="Bakaletz L.O."/>
            <person name="Munson R.S. Jr."/>
        </authorList>
    </citation>
    <scope>NUCLEOTIDE SEQUENCE [LARGE SCALE GENOMIC DNA]</scope>
    <source>
        <strain>86-028NP</strain>
    </source>
</reference>
<keyword id="KW-0067">ATP-binding</keyword>
<keyword id="KW-0963">Cytoplasm</keyword>
<keyword id="KW-1015">Disulfide bond</keyword>
<keyword id="KW-0547">Nucleotide-binding</keyword>
<keyword id="KW-0676">Redox-active center</keyword>
<keyword id="KW-0694">RNA-binding</keyword>
<keyword id="KW-0784">Thiamine biosynthesis</keyword>
<keyword id="KW-0808">Transferase</keyword>
<keyword id="KW-0820">tRNA-binding</keyword>
<gene>
    <name evidence="1" type="primary">thiI</name>
    <name type="ordered locus">NTHI1694</name>
</gene>
<name>THII_HAEI8</name>
<dbReference type="EC" id="2.8.1.4" evidence="1"/>
<dbReference type="EMBL" id="CP000057">
    <property type="protein sequence ID" value="AAX88484.1"/>
    <property type="molecule type" value="Genomic_DNA"/>
</dbReference>
<dbReference type="RefSeq" id="WP_005656615.1">
    <property type="nucleotide sequence ID" value="NC_007146.2"/>
</dbReference>
<dbReference type="SMR" id="Q4QKG3"/>
<dbReference type="KEGG" id="hit:NTHI1694"/>
<dbReference type="HOGENOM" id="CLU_037952_4_1_6"/>
<dbReference type="UniPathway" id="UPA00060"/>
<dbReference type="Proteomes" id="UP000002525">
    <property type="component" value="Chromosome"/>
</dbReference>
<dbReference type="GO" id="GO:0005829">
    <property type="term" value="C:cytosol"/>
    <property type="evidence" value="ECO:0007669"/>
    <property type="project" value="TreeGrafter"/>
</dbReference>
<dbReference type="GO" id="GO:0005524">
    <property type="term" value="F:ATP binding"/>
    <property type="evidence" value="ECO:0007669"/>
    <property type="project" value="UniProtKB-UniRule"/>
</dbReference>
<dbReference type="GO" id="GO:0004810">
    <property type="term" value="F:CCA tRNA nucleotidyltransferase activity"/>
    <property type="evidence" value="ECO:0007669"/>
    <property type="project" value="InterPro"/>
</dbReference>
<dbReference type="GO" id="GO:0000049">
    <property type="term" value="F:tRNA binding"/>
    <property type="evidence" value="ECO:0007669"/>
    <property type="project" value="UniProtKB-UniRule"/>
</dbReference>
<dbReference type="GO" id="GO:0140741">
    <property type="term" value="F:tRNA-uracil-4 sulfurtransferase activity"/>
    <property type="evidence" value="ECO:0007669"/>
    <property type="project" value="UniProtKB-EC"/>
</dbReference>
<dbReference type="GO" id="GO:0009228">
    <property type="term" value="P:thiamine biosynthetic process"/>
    <property type="evidence" value="ECO:0007669"/>
    <property type="project" value="UniProtKB-KW"/>
</dbReference>
<dbReference type="GO" id="GO:0009229">
    <property type="term" value="P:thiamine diphosphate biosynthetic process"/>
    <property type="evidence" value="ECO:0007669"/>
    <property type="project" value="UniProtKB-UniRule"/>
</dbReference>
<dbReference type="GO" id="GO:0052837">
    <property type="term" value="P:thiazole biosynthetic process"/>
    <property type="evidence" value="ECO:0007669"/>
    <property type="project" value="InterPro"/>
</dbReference>
<dbReference type="GO" id="GO:0002937">
    <property type="term" value="P:tRNA 4-thiouridine biosynthesis"/>
    <property type="evidence" value="ECO:0007669"/>
    <property type="project" value="TreeGrafter"/>
</dbReference>
<dbReference type="CDD" id="cd01712">
    <property type="entry name" value="PPase_ThiI"/>
    <property type="match status" value="1"/>
</dbReference>
<dbReference type="CDD" id="cd00158">
    <property type="entry name" value="RHOD"/>
    <property type="match status" value="1"/>
</dbReference>
<dbReference type="CDD" id="cd11716">
    <property type="entry name" value="THUMP_ThiI"/>
    <property type="match status" value="1"/>
</dbReference>
<dbReference type="FunFam" id="3.30.2130.30:FF:000002">
    <property type="entry name" value="tRNA sulfurtransferase"/>
    <property type="match status" value="1"/>
</dbReference>
<dbReference type="FunFam" id="3.40.50.620:FF:000029">
    <property type="entry name" value="tRNA sulfurtransferase"/>
    <property type="match status" value="1"/>
</dbReference>
<dbReference type="Gene3D" id="3.30.2130.30">
    <property type="match status" value="1"/>
</dbReference>
<dbReference type="Gene3D" id="3.40.50.620">
    <property type="entry name" value="HUPs"/>
    <property type="match status" value="1"/>
</dbReference>
<dbReference type="Gene3D" id="3.40.250.10">
    <property type="entry name" value="Rhodanese-like domain"/>
    <property type="match status" value="1"/>
</dbReference>
<dbReference type="HAMAP" id="MF_00021">
    <property type="entry name" value="ThiI"/>
    <property type="match status" value="1"/>
</dbReference>
<dbReference type="InterPro" id="IPR001763">
    <property type="entry name" value="Rhodanese-like_dom"/>
</dbReference>
<dbReference type="InterPro" id="IPR036873">
    <property type="entry name" value="Rhodanese-like_dom_sf"/>
</dbReference>
<dbReference type="InterPro" id="IPR014729">
    <property type="entry name" value="Rossmann-like_a/b/a_fold"/>
</dbReference>
<dbReference type="InterPro" id="IPR020536">
    <property type="entry name" value="ThiI_AANH"/>
</dbReference>
<dbReference type="InterPro" id="IPR054173">
    <property type="entry name" value="ThiI_fer"/>
</dbReference>
<dbReference type="InterPro" id="IPR049961">
    <property type="entry name" value="ThiI_N"/>
</dbReference>
<dbReference type="InterPro" id="IPR026340">
    <property type="entry name" value="THII_Thiazole_biosynth_dom"/>
</dbReference>
<dbReference type="InterPro" id="IPR004114">
    <property type="entry name" value="THUMP_dom"/>
</dbReference>
<dbReference type="InterPro" id="IPR049962">
    <property type="entry name" value="THUMP_ThiI"/>
</dbReference>
<dbReference type="InterPro" id="IPR003720">
    <property type="entry name" value="tRNA_STrfase"/>
</dbReference>
<dbReference type="InterPro" id="IPR050102">
    <property type="entry name" value="tRNA_sulfurtransferase_ThiI"/>
</dbReference>
<dbReference type="NCBIfam" id="TIGR04271">
    <property type="entry name" value="ThiI_C_thiazole"/>
    <property type="match status" value="1"/>
</dbReference>
<dbReference type="NCBIfam" id="TIGR00342">
    <property type="entry name" value="tRNA uracil 4-sulfurtransferase ThiI"/>
    <property type="match status" value="1"/>
</dbReference>
<dbReference type="PANTHER" id="PTHR43209">
    <property type="entry name" value="TRNA SULFURTRANSFERASE"/>
    <property type="match status" value="1"/>
</dbReference>
<dbReference type="PANTHER" id="PTHR43209:SF1">
    <property type="entry name" value="TRNA SULFURTRANSFERASE"/>
    <property type="match status" value="1"/>
</dbReference>
<dbReference type="Pfam" id="PF02568">
    <property type="entry name" value="ThiI"/>
    <property type="match status" value="1"/>
</dbReference>
<dbReference type="Pfam" id="PF22025">
    <property type="entry name" value="ThiI_fer"/>
    <property type="match status" value="1"/>
</dbReference>
<dbReference type="Pfam" id="PF02926">
    <property type="entry name" value="THUMP"/>
    <property type="match status" value="1"/>
</dbReference>
<dbReference type="SMART" id="SM00981">
    <property type="entry name" value="THUMP"/>
    <property type="match status" value="1"/>
</dbReference>
<dbReference type="SUPFAM" id="SSF52402">
    <property type="entry name" value="Adenine nucleotide alpha hydrolases-like"/>
    <property type="match status" value="1"/>
</dbReference>
<dbReference type="SUPFAM" id="SSF52821">
    <property type="entry name" value="Rhodanese/Cell cycle control phosphatase"/>
    <property type="match status" value="1"/>
</dbReference>
<dbReference type="SUPFAM" id="SSF143437">
    <property type="entry name" value="THUMP domain-like"/>
    <property type="match status" value="1"/>
</dbReference>
<dbReference type="PROSITE" id="PS50206">
    <property type="entry name" value="RHODANESE_3"/>
    <property type="match status" value="1"/>
</dbReference>
<dbReference type="PROSITE" id="PS51165">
    <property type="entry name" value="THUMP"/>
    <property type="match status" value="1"/>
</dbReference>
<evidence type="ECO:0000255" key="1">
    <source>
        <dbReference type="HAMAP-Rule" id="MF_00021"/>
    </source>
</evidence>
<protein>
    <recommendedName>
        <fullName evidence="1">tRNA sulfurtransferase</fullName>
        <ecNumber evidence="1">2.8.1.4</ecNumber>
    </recommendedName>
    <alternativeName>
        <fullName evidence="1">Sulfur carrier protein ThiS sulfurtransferase</fullName>
    </alternativeName>
    <alternativeName>
        <fullName evidence="1">Thiamine biosynthesis protein ThiI</fullName>
    </alternativeName>
    <alternativeName>
        <fullName evidence="1">tRNA 4-thiouridine synthase</fullName>
    </alternativeName>
</protein>
<proteinExistence type="inferred from homology"/>
<sequence length="485" mass="55169">MKFIVKLFPEIMIKSETVRKRFAKILTSNIRNILQKYDEETAVVRHWDYIEVRSKNEENREELIALLQRIPGIHHFLEVEEKPFTDLHHIFELTLADVAQQLQGKTFCVRVKRKGKHKFSSIEAERYIGGGLNQHIESAKVRLKNPDVTVRIDIEDDKMMLVKTRHAGIGGYPIGTQEDVLSLISGGFDSGVSSYMLIRRGSRVHYCFFNLGGAAHEIGVKQMAYHIWQRYSASHKVRFITINFEGVVGEILEKVDNGQMGVVLKRMMVRAASKVAQRFNIEAIVTGEALGQVSSQTLTNLRLIDEAADALVLRPLITHDKEQIIAMAKEIGTDDIAKSMPEFCGVISKNPTIKAVREKILEEEGHFNFEILESSVQNAKYLDIRQIAEETEKEVVEVEAISVLGENEVILDIRSPEETDEKPFESGTHDVIQMPFYKLSSQFGSLDQSKNYVLYCERGVMSKLQALYLKENGFSNVRVFAKNIH</sequence>
<organism>
    <name type="scientific">Haemophilus influenzae (strain 86-028NP)</name>
    <dbReference type="NCBI Taxonomy" id="281310"/>
    <lineage>
        <taxon>Bacteria</taxon>
        <taxon>Pseudomonadati</taxon>
        <taxon>Pseudomonadota</taxon>
        <taxon>Gammaproteobacteria</taxon>
        <taxon>Pasteurellales</taxon>
        <taxon>Pasteurellaceae</taxon>
        <taxon>Haemophilus</taxon>
    </lineage>
</organism>